<sequence length="350" mass="40100">MAAAAATPRLEAPEPMPSYAQMLQRSWASALAAAQGCGDCGWGLARRGLAEHAHLAAPELLLAVLCALGWTALRWAATTHIFRPLAKRCRLQPRDAARLPESAWKLLFYLACWSYCAYLLLGTSYPFFHDPPSVFYDWRSGMAVPWDIAVAYLLQGSFYCHSIYATVYMDSWRKDSVVMLVHHVVTLLLIASSYAFRYHNVGLLVFFLHDVSDVQLEFTKLNIYFKARGGAYHRLHGLVANLGCLSFCFCWFWFRLYWFPLKVLYATCHCSLQSVPDIPYYFFFNILLLLLMVMNIYWFLYIVAFAAKVLTGQMRELEDLREYDTLEAQTAKPCKAEKPLRNGLVKDKLF</sequence>
<reference key="1">
    <citation type="journal article" date="1991" name="Proc. Natl. Acad. Sci. U.S.A.">
        <title>Expression of growth/differentiation factor 1 in the nervous system: conservation of a bicistronic structure.</title>
        <authorList>
            <person name="Lee S.-J."/>
        </authorList>
    </citation>
    <scope>NUCLEOTIDE SEQUENCE [MRNA]</scope>
</reference>
<reference key="2">
    <citation type="journal article" date="2002" name="J. Biol. Chem.">
        <title>Upstream of growth and differentiation factor 1 (uog1), a mammalian homolog of the yeast longevity assurance gene 1 (LAG1), regulates N-stearoyl-sphinganine (C18-(dihydro)ceramide) synthesis in a fumonisin B1-independent manner in mammalian cells.</title>
        <authorList>
            <person name="Venkataraman K."/>
            <person name="Riebeling C."/>
            <person name="Bodennec J."/>
            <person name="Riezman H."/>
            <person name="Allegood J.C."/>
            <person name="Sullards M.C."/>
            <person name="Merrill A.H. Jr."/>
            <person name="Futerman A.H."/>
        </authorList>
    </citation>
    <scope>FUNCTION</scope>
    <scope>PATHWAY</scope>
</reference>
<reference key="3">
    <citation type="journal article" date="2005" name="Biochem. J.">
        <title>Mammalian Lass6 and its related family members regulate synthesis of specific ceramides.</title>
        <authorList>
            <person name="Mizutani Y."/>
            <person name="Kihara A."/>
            <person name="Igarashi Y."/>
        </authorList>
    </citation>
    <scope>TISSUE SPECIFICITY</scope>
    <scope>CATALYTIC ACTIVITY</scope>
</reference>
<reference key="4">
    <citation type="journal article" date="2006" name="J. Biol. Chem.">
        <title>Necessary role for the Lag1p motif in (dihydro)ceramide synthase activity.</title>
        <authorList>
            <person name="Spassieva S."/>
            <person name="Seo J.G."/>
            <person name="Jiang J.C."/>
            <person name="Bielawski J."/>
            <person name="Alvarez-Vasquez F."/>
            <person name="Jazwinski S.M."/>
            <person name="Hannun Y.A."/>
            <person name="Obeid L.M."/>
        </authorList>
    </citation>
    <scope>FUNCTION</scope>
    <scope>CATALYTIC ACTIVITY</scope>
    <scope>PATHWAY</scope>
    <scope>ACTIVITY REGULATION</scope>
    <scope>MUTAGENESIS OF HIS-182; HIS-183; LEU-189; SER-193; ASP-210; ASP-213; LEU-216 AND LYS-220</scope>
</reference>
<reference key="5">
    <citation type="journal article" date="2007" name="FEBS Lett.">
        <title>Kinetic characterization of mammalian ceramide synthases: determination of K(m) values towards sphinganine.</title>
        <authorList>
            <person name="Lahiri S."/>
            <person name="Lee H."/>
            <person name="Mesicek J."/>
            <person name="Fuks Z."/>
            <person name="Haimovitz-Friedman A."/>
            <person name="Kolesnick R.N."/>
            <person name="Futerman A.H."/>
        </authorList>
    </citation>
    <scope>FUNCTION</scope>
    <scope>CATALYTIC ACTIVITY</scope>
    <scope>PATHWAY</scope>
    <scope>BIOPHYSICOCHEMICAL PROPERTIES</scope>
</reference>
<reference key="6">
    <citation type="journal article" date="2008" name="J. Lipid Res.">
        <title>2-Hydroxy-ceramide synthesis by ceramide synthase family: enzymatic basis for the preference of FA chain length.</title>
        <authorList>
            <person name="Mizutani Y."/>
            <person name="Kihara A."/>
            <person name="Chiba H."/>
            <person name="Tojo H."/>
            <person name="Igarashi Y."/>
        </authorList>
    </citation>
    <scope>FUNCTION</scope>
    <scope>CATALYTIC ACTIVITY</scope>
    <scope>PATHWAY</scope>
</reference>
<reference key="7">
    <citation type="journal article" date="2011" name="PLoS Genet.">
        <title>A deficiency of ceramide biosynthesis causes cerebellar purkinje cell neurodegeneration and lipofuscin accumulation.</title>
        <authorList>
            <person name="Zhao L."/>
            <person name="Spassieva S.D."/>
            <person name="Jucius T.J."/>
            <person name="Shultz L.D."/>
            <person name="Shick H.E."/>
            <person name="Macklin W.B."/>
            <person name="Hannun Y.A."/>
            <person name="Obeid L.M."/>
            <person name="Ackerman S.L."/>
        </authorList>
    </citation>
    <scope>FUNCTION</scope>
    <scope>CATALYTIC ACTIVITY</scope>
    <scope>INVOLVEMENT IN NEURODEGENERATION</scope>
    <scope>VARIANT ASP-266</scope>
    <scope>CHARACTERIZATION OF VARIANT ALA-266</scope>
</reference>
<reference key="8">
    <citation type="journal article" date="2016" name="J. Biol. Chem.">
        <title>SIRT3 deacetylates ceramide synthases: Implications for mitochondrial dysfunction and brain injury.</title>
        <authorList>
            <person name="Novgorodov S.A."/>
            <person name="Riley C.L."/>
            <person name="Keffler J.A."/>
            <person name="Yu J."/>
            <person name="Kindy M.S."/>
            <person name="Macklin W.B."/>
            <person name="Lombard D.B."/>
            <person name="Gudz T.I."/>
        </authorList>
    </citation>
    <scope>ACETYLATION</scope>
    <scope>DEACETYLATION BY SIRT3</scope>
</reference>
<reference key="9">
    <citation type="journal article" date="2019" name="Cell Rep.">
        <title>CerS1-Derived C18:0 Ceramide in Skeletal Muscle Promotes Obesity-Induced Insulin Resistance.</title>
        <authorList>
            <person name="Turpin-Nolan S.M."/>
            <person name="Hammerschmidt P."/>
            <person name="Chen W."/>
            <person name="Jais A."/>
            <person name="Timper K."/>
            <person name="Awazawa M."/>
            <person name="Brodesser S."/>
            <person name="Bruening J.C."/>
        </authorList>
    </citation>
    <scope>FUNCTION</scope>
    <scope>CATALYTIC ACTIVITY</scope>
    <scope>PATHWAY</scope>
    <scope>TISSUE SPECIFICITY</scope>
    <scope>INDUCTION BY HIGH-FAT DIET</scope>
</reference>
<name>CERS1_MOUSE</name>
<protein>
    <recommendedName>
        <fullName evidence="14">Ceramide synthase 1</fullName>
        <shortName evidence="14">CerS1</shortName>
    </recommendedName>
    <alternativeName>
        <fullName evidence="13">Longevity assurance gene 1 protein homolog 1</fullName>
    </alternativeName>
    <alternativeName>
        <fullName evidence="15">Protein UOG-1</fullName>
    </alternativeName>
    <alternativeName>
        <fullName evidence="16">Sphingoid base N-stearoyltransferase CERS1</fullName>
        <ecNumber evidence="5 6 7 8">2.3.1.299</ecNumber>
    </alternativeName>
</protein>
<keyword id="KW-0007">Acetylation</keyword>
<keyword id="KW-0256">Endoplasmic reticulum</keyword>
<keyword id="KW-0444">Lipid biosynthesis</keyword>
<keyword id="KW-0443">Lipid metabolism</keyword>
<keyword id="KW-0472">Membrane</keyword>
<keyword id="KW-1185">Reference proteome</keyword>
<keyword id="KW-0808">Transferase</keyword>
<keyword id="KW-0812">Transmembrane</keyword>
<keyword id="KW-1133">Transmembrane helix</keyword>
<comment type="function">
    <text evidence="1 4 6 7 8 10 12">Ceramide synthase that catalyzes the transfer of the acyl chain from acyl-CoA to a sphingoid base, with high selectivity toward stearoyl-CoA (octadecanoyl-CoA; C18:0-CoA). N-acylates sphinganine and sphingosine bases to form dihydroceramides and ceramides in de novo synthesis and salvage pathways, respectively (PubMed:12105227, PubMed:16951403, PubMed:17977534, PubMed:18541923, PubMed:30605666). Plays a predominant role in skeletal muscle in regulating C18 ceramide and dihydroceramide levels with an impact on whole-body glucose metabolism and insulin sensitivity. Protects from diet-induced obesity by suppressing the uptake of glucose in multiple organs in a FGF21-dependent way (PubMed:30605666). Generates C18 ceramides in the brain, playing a critical role in cerebellar development and Purkinje cell function (PubMed:21625621). In response to cellular stress mediates mitophagy, a known defense mechanism against cell transformation and aging. Upon mitochondria fission, generates C18 ceramides that anchor lipidated MAP1LC3B/LC3B-II autophagolysosomes to outer mitochondrial membranes to eliminate damaged mitochondria (By similarity).</text>
</comment>
<comment type="catalytic activity">
    <reaction evidence="5 6 7 8">
        <text>a sphingoid base + octadecanoyl-CoA = an N-octadecanoyl-sphingoid base + CoA + H(+)</text>
        <dbReference type="Rhea" id="RHEA:61476"/>
        <dbReference type="ChEBI" id="CHEBI:15378"/>
        <dbReference type="ChEBI" id="CHEBI:57287"/>
        <dbReference type="ChEBI" id="CHEBI:57394"/>
        <dbReference type="ChEBI" id="CHEBI:84410"/>
        <dbReference type="ChEBI" id="CHEBI:144711"/>
        <dbReference type="EC" id="2.3.1.299"/>
    </reaction>
    <physiologicalReaction direction="left-to-right" evidence="5 6 7 8">
        <dbReference type="Rhea" id="RHEA:61477"/>
    </physiologicalReaction>
</comment>
<comment type="catalytic activity">
    <reaction evidence="5 6 7 8">
        <text>sphinganine + octadecanoyl-CoA = N-(octadecanoyl)-sphinganine + CoA + H(+)</text>
        <dbReference type="Rhea" id="RHEA:36547"/>
        <dbReference type="ChEBI" id="CHEBI:15378"/>
        <dbReference type="ChEBI" id="CHEBI:57287"/>
        <dbReference type="ChEBI" id="CHEBI:57394"/>
        <dbReference type="ChEBI" id="CHEBI:57817"/>
        <dbReference type="ChEBI" id="CHEBI:67033"/>
    </reaction>
    <physiologicalReaction direction="left-to-right" evidence="5 6 7 8 12">
        <dbReference type="Rhea" id="RHEA:36548"/>
    </physiologicalReaction>
</comment>
<comment type="catalytic activity">
    <reaction evidence="1">
        <text>hexadecasphinganine + octadecanoyl-CoA = N-octadecanoylhexadecasphinganine + CoA + H(+)</text>
        <dbReference type="Rhea" id="RHEA:43044"/>
        <dbReference type="ChEBI" id="CHEBI:15378"/>
        <dbReference type="ChEBI" id="CHEBI:57287"/>
        <dbReference type="ChEBI" id="CHEBI:57394"/>
        <dbReference type="ChEBI" id="CHEBI:71009"/>
        <dbReference type="ChEBI" id="CHEBI:82811"/>
    </reaction>
    <physiologicalReaction direction="left-to-right" evidence="1">
        <dbReference type="Rhea" id="RHEA:43045"/>
    </physiologicalReaction>
</comment>
<comment type="catalytic activity">
    <reaction evidence="1 18">
        <text>sphing-4-enine + octadecanoyl-CoA = N-octadecanoylsphing-4-enine + CoA + H(+)</text>
        <dbReference type="Rhea" id="RHEA:36691"/>
        <dbReference type="ChEBI" id="CHEBI:15378"/>
        <dbReference type="ChEBI" id="CHEBI:57287"/>
        <dbReference type="ChEBI" id="CHEBI:57394"/>
        <dbReference type="ChEBI" id="CHEBI:57756"/>
        <dbReference type="ChEBI" id="CHEBI:72961"/>
    </reaction>
    <physiologicalReaction direction="left-to-right" evidence="1 18">
        <dbReference type="Rhea" id="RHEA:36692"/>
    </physiologicalReaction>
</comment>
<comment type="catalytic activity">
    <reaction evidence="10">
        <text>heptadecasphing-4-enine + octadecanoyl-CoA = N-octadecanoyl-heptadecasphing-4-enine + CoA + H(+)</text>
        <dbReference type="Rhea" id="RHEA:67596"/>
        <dbReference type="ChEBI" id="CHEBI:15378"/>
        <dbReference type="ChEBI" id="CHEBI:57287"/>
        <dbReference type="ChEBI" id="CHEBI:57394"/>
        <dbReference type="ChEBI" id="CHEBI:74166"/>
        <dbReference type="ChEBI" id="CHEBI:172405"/>
    </reaction>
    <physiologicalReaction direction="left-to-right" evidence="17">
        <dbReference type="Rhea" id="RHEA:67597"/>
    </physiologicalReaction>
</comment>
<comment type="catalytic activity">
    <reaction evidence="8">
        <text>2-hydroxyoctadecanoyl-CoA + sphinganine = N-(2-hydroxyoctadecanoyl)-sphinganine + CoA + H(+)</text>
        <dbReference type="Rhea" id="RHEA:36615"/>
        <dbReference type="ChEBI" id="CHEBI:15378"/>
        <dbReference type="ChEBI" id="CHEBI:57287"/>
        <dbReference type="ChEBI" id="CHEBI:57817"/>
        <dbReference type="ChEBI" id="CHEBI:67034"/>
        <dbReference type="ChEBI" id="CHEBI:74116"/>
    </reaction>
    <physiologicalReaction direction="left-to-right" evidence="8">
        <dbReference type="Rhea" id="RHEA:36616"/>
    </physiologicalReaction>
</comment>
<comment type="catalytic activity">
    <reaction evidence="5">
        <text>eicosanoyl-CoA + sphinganine = N-eicosanoylsphinganine + CoA + H(+)</text>
        <dbReference type="Rhea" id="RHEA:36555"/>
        <dbReference type="ChEBI" id="CHEBI:15378"/>
        <dbReference type="ChEBI" id="CHEBI:57287"/>
        <dbReference type="ChEBI" id="CHEBI:57380"/>
        <dbReference type="ChEBI" id="CHEBI:57817"/>
        <dbReference type="ChEBI" id="CHEBI:67027"/>
    </reaction>
    <physiologicalReaction direction="left-to-right" evidence="5">
        <dbReference type="Rhea" id="RHEA:36556"/>
    </physiologicalReaction>
</comment>
<comment type="activity regulation">
    <text evidence="6">Inhibited by fumonisin B1.</text>
</comment>
<comment type="biophysicochemical properties">
    <kinetics>
        <KM evidence="7">2.5 uM for sphinganine</KM>
    </kinetics>
</comment>
<comment type="pathway">
    <text evidence="4 6 7 8 12">Lipid metabolism; sphingolipid metabolism.</text>
</comment>
<comment type="subcellular location">
    <subcellularLocation>
        <location evidence="1">Endoplasmic reticulum membrane</location>
        <topology evidence="2">Multi-pass membrane protein</topology>
    </subcellularLocation>
</comment>
<comment type="tissue specificity">
    <text evidence="5 12">Expressed in brain, skeletal muscle, heart and perigonadal white adipose tissue.</text>
</comment>
<comment type="induction">
    <text evidence="12">Up-regulated in skeletal muscle in response to high-fat diet.</text>
</comment>
<comment type="PTM">
    <text evidence="11">Acetylated (PubMed:26620563). Deacetylation by SIRT3 increases enzyme activity and promotes mitochondrial ceramide accumulation (PubMed:26620563).</text>
</comment>
<comment type="disease">
    <text evidence="10">Defects in CERS1 cause cerebellar ataxia and Purkinje cell degeneration. Two mouse strains flincher (fln) and toppler (to) carry spontaneous recessive mutations at the TLC domain of CERS1, resulting in complete loss of the catalytic activity associated with a reduction in sphingolipid biosynthesis and accumulation of lipofuscin in many brain regions.</text>
</comment>
<comment type="miscellaneous">
    <text evidence="9">This protein is produced by a bicistronic gene which also produces the GDF1 protein from a non-overlapping reading frame.</text>
</comment>
<gene>
    <name evidence="14 19" type="primary">Cers1</name>
    <name evidence="13" type="synonym">Lass1</name>
    <name evidence="15" type="synonym">Uog-1</name>
    <name evidence="15" type="synonym">Uog1</name>
</gene>
<evidence type="ECO:0000250" key="1">
    <source>
        <dbReference type="UniProtKB" id="P27544"/>
    </source>
</evidence>
<evidence type="ECO:0000255" key="2"/>
<evidence type="ECO:0000255" key="3">
    <source>
        <dbReference type="PROSITE-ProRule" id="PRU00205"/>
    </source>
</evidence>
<evidence type="ECO:0000269" key="4">
    <source>
    </source>
</evidence>
<evidence type="ECO:0000269" key="5">
    <source>
    </source>
</evidence>
<evidence type="ECO:0000269" key="6">
    <source>
    </source>
</evidence>
<evidence type="ECO:0000269" key="7">
    <source>
    </source>
</evidence>
<evidence type="ECO:0000269" key="8">
    <source>
    </source>
</evidence>
<evidence type="ECO:0000269" key="9">
    <source>
    </source>
</evidence>
<evidence type="ECO:0000269" key="10">
    <source>
    </source>
</evidence>
<evidence type="ECO:0000269" key="11">
    <source>
    </source>
</evidence>
<evidence type="ECO:0000269" key="12">
    <source>
    </source>
</evidence>
<evidence type="ECO:0000303" key="13">
    <source>
    </source>
</evidence>
<evidence type="ECO:0000303" key="14">
    <source>
    </source>
</evidence>
<evidence type="ECO:0000303" key="15">
    <source>
    </source>
</evidence>
<evidence type="ECO:0000305" key="16"/>
<evidence type="ECO:0000305" key="17">
    <source>
    </source>
</evidence>
<evidence type="ECO:0000305" key="18">
    <source>
    </source>
</evidence>
<evidence type="ECO:0000312" key="19">
    <source>
        <dbReference type="MGI" id="MGI:2136690"/>
    </source>
</evidence>
<proteinExistence type="evidence at protein level"/>
<accession>P27545</accession>
<dbReference type="EC" id="2.3.1.299" evidence="5 6 7 8"/>
<dbReference type="EMBL" id="M62301">
    <property type="protein sequence ID" value="AAA37675.1"/>
    <property type="molecule type" value="mRNA"/>
</dbReference>
<dbReference type="CCDS" id="CCDS52570.1"/>
<dbReference type="PIR" id="B39364">
    <property type="entry name" value="B39364"/>
</dbReference>
<dbReference type="RefSeq" id="NP_619588.1">
    <property type="nucleotide sequence ID" value="NM_138647.3"/>
</dbReference>
<dbReference type="SMR" id="P27545"/>
<dbReference type="FunCoup" id="P27545">
    <property type="interactions" value="855"/>
</dbReference>
<dbReference type="BindingDB" id="P27545"/>
<dbReference type="ChEMBL" id="CHEMBL5291538"/>
<dbReference type="SwissLipids" id="SLP:000000115"/>
<dbReference type="PhosphoSitePlus" id="P27545"/>
<dbReference type="SwissPalm" id="P27545"/>
<dbReference type="PaxDb" id="10090-ENSMUSP00000120598"/>
<dbReference type="ProteomicsDB" id="280008"/>
<dbReference type="DNASU" id="93898"/>
<dbReference type="Ensembl" id="ENSMUST00000140239.4">
    <property type="protein sequence ID" value="ENSMUSP00000120598.2"/>
    <property type="gene ID" value="ENSMUSG00000087408.11"/>
</dbReference>
<dbReference type="GeneID" id="93898"/>
<dbReference type="KEGG" id="mmu:93898"/>
<dbReference type="AGR" id="MGI:2136690"/>
<dbReference type="CTD" id="10715"/>
<dbReference type="MGI" id="MGI:2136690">
    <property type="gene designation" value="Cers1"/>
</dbReference>
<dbReference type="VEuPathDB" id="HostDB:ENSMUSG00000087408"/>
<dbReference type="eggNOG" id="KOG1607">
    <property type="taxonomic scope" value="Eukaryota"/>
</dbReference>
<dbReference type="GeneTree" id="ENSGT00940000162926"/>
<dbReference type="HOGENOM" id="CLU_028277_0_0_1"/>
<dbReference type="InParanoid" id="P27545"/>
<dbReference type="OMA" id="HVLNLKI"/>
<dbReference type="OrthoDB" id="537032at2759"/>
<dbReference type="PhylomeDB" id="P27545"/>
<dbReference type="TreeFam" id="TF314319"/>
<dbReference type="BRENDA" id="2.3.1.299">
    <property type="organism ID" value="3474"/>
</dbReference>
<dbReference type="Reactome" id="R-MMU-1660661">
    <property type="pathway name" value="Sphingolipid de novo biosynthesis"/>
</dbReference>
<dbReference type="UniPathway" id="UPA00222"/>
<dbReference type="BioGRID-ORCS" id="93898">
    <property type="hits" value="2 hits in 33 CRISPR screens"/>
</dbReference>
<dbReference type="PRO" id="PR:P27545"/>
<dbReference type="Proteomes" id="UP000000589">
    <property type="component" value="Chromosome 8"/>
</dbReference>
<dbReference type="RNAct" id="P27545">
    <property type="molecule type" value="protein"/>
</dbReference>
<dbReference type="Bgee" id="ENSMUSG00000087408">
    <property type="expression patterns" value="Expressed in striatum and 45 other cell types or tissues"/>
</dbReference>
<dbReference type="ExpressionAtlas" id="P27545">
    <property type="expression patterns" value="baseline and differential"/>
</dbReference>
<dbReference type="GO" id="GO:0005783">
    <property type="term" value="C:endoplasmic reticulum"/>
    <property type="evidence" value="ECO:0000250"/>
    <property type="project" value="UniProtKB"/>
</dbReference>
<dbReference type="GO" id="GO:0005789">
    <property type="term" value="C:endoplasmic reticulum membrane"/>
    <property type="evidence" value="ECO:0007669"/>
    <property type="project" value="UniProtKB-SubCell"/>
</dbReference>
<dbReference type="GO" id="GO:0043231">
    <property type="term" value="C:intracellular membrane-bounded organelle"/>
    <property type="evidence" value="ECO:0000314"/>
    <property type="project" value="BHF-UCL"/>
</dbReference>
<dbReference type="GO" id="GO:0016410">
    <property type="term" value="F:N-acyltransferase activity"/>
    <property type="evidence" value="ECO:0000315"/>
    <property type="project" value="UniProtKB"/>
</dbReference>
<dbReference type="GO" id="GO:0050291">
    <property type="term" value="F:sphingosine N-acyltransferase activity"/>
    <property type="evidence" value="ECO:0000314"/>
    <property type="project" value="UniProtKB"/>
</dbReference>
<dbReference type="GO" id="GO:0007420">
    <property type="term" value="P:brain development"/>
    <property type="evidence" value="ECO:0000315"/>
    <property type="project" value="MGI"/>
</dbReference>
<dbReference type="GO" id="GO:0072721">
    <property type="term" value="P:cellular response to dithiothreitol"/>
    <property type="evidence" value="ECO:0007669"/>
    <property type="project" value="Ensembl"/>
</dbReference>
<dbReference type="GO" id="GO:0036146">
    <property type="term" value="P:cellular response to mycotoxin"/>
    <property type="evidence" value="ECO:0007669"/>
    <property type="project" value="Ensembl"/>
</dbReference>
<dbReference type="GO" id="GO:0071492">
    <property type="term" value="P:cellular response to UV-A"/>
    <property type="evidence" value="ECO:0007669"/>
    <property type="project" value="Ensembl"/>
</dbReference>
<dbReference type="GO" id="GO:0071466">
    <property type="term" value="P:cellular response to xenobiotic stimulus"/>
    <property type="evidence" value="ECO:0007669"/>
    <property type="project" value="Ensembl"/>
</dbReference>
<dbReference type="GO" id="GO:0046513">
    <property type="term" value="P:ceramide biosynthetic process"/>
    <property type="evidence" value="ECO:0000314"/>
    <property type="project" value="UniProtKB"/>
</dbReference>
<dbReference type="GO" id="GO:0010614">
    <property type="term" value="P:negative regulation of cardiac muscle hypertrophy"/>
    <property type="evidence" value="ECO:0007669"/>
    <property type="project" value="Ensembl"/>
</dbReference>
<dbReference type="GO" id="GO:0046325">
    <property type="term" value="P:negative regulation of D-glucose import"/>
    <property type="evidence" value="ECO:0000315"/>
    <property type="project" value="UniProtKB"/>
</dbReference>
<dbReference type="GO" id="GO:1901526">
    <property type="term" value="P:positive regulation of mitophagy"/>
    <property type="evidence" value="ECO:0007669"/>
    <property type="project" value="Ensembl"/>
</dbReference>
<dbReference type="InterPro" id="IPR016439">
    <property type="entry name" value="Lag1/Lac1-like"/>
</dbReference>
<dbReference type="InterPro" id="IPR006634">
    <property type="entry name" value="TLC-dom"/>
</dbReference>
<dbReference type="PANTHER" id="PTHR12560:SF58">
    <property type="entry name" value="CERAMIDE SYNTHASE 1"/>
    <property type="match status" value="1"/>
</dbReference>
<dbReference type="PANTHER" id="PTHR12560">
    <property type="entry name" value="LONGEVITY ASSURANCE FACTOR 1 LAG1"/>
    <property type="match status" value="1"/>
</dbReference>
<dbReference type="Pfam" id="PF03798">
    <property type="entry name" value="TRAM_LAG1_CLN8"/>
    <property type="match status" value="1"/>
</dbReference>
<dbReference type="SMART" id="SM00724">
    <property type="entry name" value="TLC"/>
    <property type="match status" value="1"/>
</dbReference>
<dbReference type="PROSITE" id="PS50922">
    <property type="entry name" value="TLC"/>
    <property type="match status" value="1"/>
</dbReference>
<feature type="initiator methionine" description="Removed" evidence="1">
    <location>
        <position position="1"/>
    </location>
</feature>
<feature type="chain" id="PRO_0000185508" description="Ceramide synthase 1">
    <location>
        <begin position="2"/>
        <end position="350"/>
    </location>
</feature>
<feature type="transmembrane region" description="Helical" evidence="2">
    <location>
        <begin position="53"/>
        <end position="73"/>
    </location>
</feature>
<feature type="transmembrane region" description="Helical" evidence="2">
    <location>
        <begin position="103"/>
        <end position="123"/>
    </location>
</feature>
<feature type="transmembrane region" description="Helical" evidence="2">
    <location>
        <begin position="148"/>
        <end position="168"/>
    </location>
</feature>
<feature type="transmembrane region" description="Helical" evidence="2">
    <location>
        <begin position="176"/>
        <end position="196"/>
    </location>
</feature>
<feature type="transmembrane region" description="Helical" evidence="2">
    <location>
        <begin position="239"/>
        <end position="259"/>
    </location>
</feature>
<feature type="transmembrane region" description="Helical" evidence="2">
    <location>
        <begin position="287"/>
        <end position="307"/>
    </location>
</feature>
<feature type="domain" description="TLC" evidence="3">
    <location>
        <begin position="97"/>
        <end position="311"/>
    </location>
</feature>
<feature type="modified residue" description="N-acetylalanine" evidence="1">
    <location>
        <position position="2"/>
    </location>
</feature>
<feature type="sequence variant" description="In toppler (to) mice; impairs ceramide synthase activity." evidence="10">
    <original>A</original>
    <variation>D</variation>
    <location>
        <position position="266"/>
    </location>
</feature>
<feature type="mutagenesis site" description="Decreased ceramide synthase activity." evidence="6">
    <original>H</original>
    <variation>D</variation>
    <location>
        <position position="182"/>
    </location>
</feature>
<feature type="mutagenesis site" description="Decreased ceramide synthase activity." evidence="6">
    <original>H</original>
    <variation>D</variation>
    <location>
        <position position="183"/>
    </location>
</feature>
<feature type="mutagenesis site" description="Decreased ceramide synthase activity." evidence="6">
    <original>L</original>
    <variation>E</variation>
    <location>
        <position position="189"/>
    </location>
</feature>
<feature type="mutagenesis site" description="Does not affect ceramide synthase activity." evidence="6">
    <original>S</original>
    <variation>A</variation>
    <location>
        <position position="193"/>
    </location>
</feature>
<feature type="mutagenesis site" description="Decreased ceramide synthase activity." evidence="6">
    <original>D</original>
    <variation>N</variation>
    <location>
        <position position="210"/>
    </location>
</feature>
<feature type="mutagenesis site" description="Decreased ceramide synthase activity." evidence="6">
    <original>D</original>
    <variation>N</variation>
    <location>
        <position position="213"/>
    </location>
</feature>
<feature type="mutagenesis site" description="Decreased ceramide synthase activity." evidence="6">
    <original>L</original>
    <variation>E</variation>
    <location>
        <position position="216"/>
    </location>
</feature>
<feature type="mutagenesis site" description="Does not affect ceramide synthase activity." evidence="6">
    <original>K</original>
    <variation>L</variation>
    <location>
        <position position="220"/>
    </location>
</feature>
<organism>
    <name type="scientific">Mus musculus</name>
    <name type="common">Mouse</name>
    <dbReference type="NCBI Taxonomy" id="10090"/>
    <lineage>
        <taxon>Eukaryota</taxon>
        <taxon>Metazoa</taxon>
        <taxon>Chordata</taxon>
        <taxon>Craniata</taxon>
        <taxon>Vertebrata</taxon>
        <taxon>Euteleostomi</taxon>
        <taxon>Mammalia</taxon>
        <taxon>Eutheria</taxon>
        <taxon>Euarchontoglires</taxon>
        <taxon>Glires</taxon>
        <taxon>Rodentia</taxon>
        <taxon>Myomorpha</taxon>
        <taxon>Muroidea</taxon>
        <taxon>Muridae</taxon>
        <taxon>Murinae</taxon>
        <taxon>Mus</taxon>
        <taxon>Mus</taxon>
    </lineage>
</organism>